<gene>
    <name type="primary">yggS</name>
    <name type="ordered locus">b2951</name>
    <name type="ordered locus">JW2918</name>
</gene>
<proteinExistence type="evidence at protein level"/>
<sequence>MNDIAHNLAQVRDKISAAATRCGRSPEEITLLAVSKTKPASAIAEAIDAGQRQFGENYVQEGVDKIRHFQELGVTGLEWHFIGPLQSNKSRLVAEHFDWCHTIDRLRIATRLNDQRPAELPPLNVLIQINISDENSKSGIQLAELDELAAAVAELPRLRLRGLMAIPAPESEYVRQFEVARQMAVAFAGLKTRYPHIDTLSLGMSDDMEAAIAAGSTMVRIGTAIFGARDYSKK</sequence>
<reference key="1">
    <citation type="journal article" date="1997" name="Science">
        <title>The complete genome sequence of Escherichia coli K-12.</title>
        <authorList>
            <person name="Blattner F.R."/>
            <person name="Plunkett G. III"/>
            <person name="Bloch C.A."/>
            <person name="Perna N.T."/>
            <person name="Burland V."/>
            <person name="Riley M."/>
            <person name="Collado-Vides J."/>
            <person name="Glasner J.D."/>
            <person name="Rode C.K."/>
            <person name="Mayhew G.F."/>
            <person name="Gregor J."/>
            <person name="Davis N.W."/>
            <person name="Kirkpatrick H.A."/>
            <person name="Goeden M.A."/>
            <person name="Rose D.J."/>
            <person name="Mau B."/>
            <person name="Shao Y."/>
        </authorList>
    </citation>
    <scope>NUCLEOTIDE SEQUENCE [LARGE SCALE GENOMIC DNA]</scope>
    <source>
        <strain>K12 / MG1655 / ATCC 47076</strain>
    </source>
</reference>
<reference key="2">
    <citation type="journal article" date="2006" name="Mol. Syst. Biol.">
        <title>Highly accurate genome sequences of Escherichia coli K-12 strains MG1655 and W3110.</title>
        <authorList>
            <person name="Hayashi K."/>
            <person name="Morooka N."/>
            <person name="Yamamoto Y."/>
            <person name="Fujita K."/>
            <person name="Isono K."/>
            <person name="Choi S."/>
            <person name="Ohtsubo E."/>
            <person name="Baba T."/>
            <person name="Wanner B.L."/>
            <person name="Mori H."/>
            <person name="Horiuchi T."/>
        </authorList>
    </citation>
    <scope>NUCLEOTIDE SEQUENCE [LARGE SCALE GENOMIC DNA]</scope>
    <source>
        <strain>K12 / W3110 / ATCC 27325 / DSM 5911</strain>
    </source>
</reference>
<reference key="3">
    <citation type="journal article" date="2013" name="J. Bacteriol.">
        <title>Conserved pyridoxal protein that regulates Ile and Val metabolism.</title>
        <authorList>
            <person name="Ito T."/>
            <person name="Iimori J."/>
            <person name="Takayama S."/>
            <person name="Moriyama A."/>
            <person name="Yamauchi A."/>
            <person name="Hemmi H."/>
            <person name="Yoshimura T."/>
        </authorList>
    </citation>
    <scope>DISRUPTION PHENOTYPE</scope>
    <scope>LACK OF RACEMASE ACTIVITY</scope>
    <scope>MUTAGENESIS OF LYS-36</scope>
    <source>
        <strain>K12 / MG1655 / ATCC 47076</strain>
    </source>
</reference>
<reference key="4">
    <citation type="journal article" date="2016" name="J. Biosci. Bioeng.">
        <title>Ophthalmic acid accumulation in an Escherichia coli mutant lacking the conserved pyridoxal 5'-phosphate-binding protein YggS.</title>
        <authorList>
            <person name="Ito T."/>
            <person name="Yamauchi A."/>
            <person name="Hemmi H."/>
            <person name="Yoshimura T."/>
        </authorList>
    </citation>
    <scope>DISRUPTION PHENOTYPE</scope>
    <source>
        <strain>K12 / MG1655 / ATCC 47076</strain>
    </source>
</reference>
<reference key="5">
    <citation type="journal article" date="2016" name="Microbiology">
        <title>Evidence that COG0325 proteins are involved in PLP homeostasis.</title>
        <authorList>
            <person name="Prunetti L."/>
            <person name="El Yacoubi B."/>
            <person name="Schiavon C.R."/>
            <person name="Kirkpatrick E."/>
            <person name="Huang L."/>
            <person name="Bailly M."/>
            <person name="ElBadawi-Sidhu M."/>
            <person name="Harrison K."/>
            <person name="Gregory J.F."/>
            <person name="Fiehn O."/>
            <person name="Hanson A.D."/>
            <person name="de Crecy-Lagard V."/>
        </authorList>
    </citation>
    <scope>FUNCTION</scope>
    <scope>SUBUNIT</scope>
    <scope>DISRUPTION PHENOTYPE</scope>
</reference>
<reference evidence="8" key="6">
    <citation type="submission" date="2004-09" db="PDB data bank">
        <title>Crystal structure of E. coli K-12 YggS.</title>
        <authorList>
            <person name="Sulzenbacher G."/>
            <person name="Gruez A."/>
            <person name="Spinelli S."/>
            <person name="Roig-Zamboni V."/>
            <person name="Pagot F."/>
            <person name="Bignon C."/>
            <person name="Vincentelli R."/>
            <person name="Cambillau C."/>
        </authorList>
    </citation>
    <scope>X-RAY CRYSTALLOGRAPHY (2.00 ANGSTROMS) IN COMPLEX WITH PYRIDOXAL PHOSPHATE</scope>
</reference>
<reference evidence="9" key="7">
    <citation type="submission" date="2011-07" db="PDB data bank">
        <title>Crystal structure of engineered protein. Northeast structural genomics consortium target OR70.</title>
        <authorList>
            <person name="Vorobiev S."/>
            <person name="Su M."/>
            <person name="Nivon L."/>
            <person name="Seetharaman J."/>
            <person name="Sahdev S."/>
            <person name="Xiao R."/>
            <person name="Ciccosanti C."/>
            <person name="Maglaqui M."/>
            <person name="Baker D."/>
            <person name="Everett J.K."/>
            <person name="Nair R."/>
            <person name="Acton T.B."/>
            <person name="Rost B."/>
            <person name="Montelione G.T."/>
            <person name="Hunt J.F."/>
            <person name="Tong L."/>
        </authorList>
    </citation>
    <scope>X-RAY CRYSTALLOGRAPHY (1.47 ANGSTROMS)</scope>
</reference>
<keyword id="KW-0002">3D-structure</keyword>
<keyword id="KW-0663">Pyridoxal phosphate</keyword>
<keyword id="KW-1185">Reference proteome</keyword>
<protein>
    <recommendedName>
        <fullName evidence="1 6">Pyridoxal phosphate homeostasis protein</fullName>
        <shortName evidence="1 6">PLP homeostasis protein</shortName>
    </recommendedName>
</protein>
<name>PLPHP_ECOLI</name>
<dbReference type="EMBL" id="U28377">
    <property type="protein sequence ID" value="AAA69118.1"/>
    <property type="molecule type" value="Genomic_DNA"/>
</dbReference>
<dbReference type="EMBL" id="U00096">
    <property type="protein sequence ID" value="AAC75988.1"/>
    <property type="molecule type" value="Genomic_DNA"/>
</dbReference>
<dbReference type="EMBL" id="AP009048">
    <property type="protein sequence ID" value="BAE77014.1"/>
    <property type="molecule type" value="Genomic_DNA"/>
</dbReference>
<dbReference type="PIR" id="F65080">
    <property type="entry name" value="F65080"/>
</dbReference>
<dbReference type="RefSeq" id="NP_417426.1">
    <property type="nucleotide sequence ID" value="NC_000913.3"/>
</dbReference>
<dbReference type="RefSeq" id="WP_000997795.1">
    <property type="nucleotide sequence ID" value="NZ_STEB01000001.1"/>
</dbReference>
<dbReference type="PDB" id="1W8G">
    <property type="method" value="X-ray"/>
    <property type="resolution" value="2.00 A"/>
    <property type="chains" value="A=1-234"/>
</dbReference>
<dbReference type="PDB" id="3SY1">
    <property type="method" value="X-ray"/>
    <property type="resolution" value="1.46 A"/>
    <property type="chains" value="A=1-234"/>
</dbReference>
<dbReference type="PDB" id="7U9C">
    <property type="method" value="X-ray"/>
    <property type="resolution" value="2.10 A"/>
    <property type="chains" value="A=1-234"/>
</dbReference>
<dbReference type="PDB" id="7U9H">
    <property type="method" value="X-ray"/>
    <property type="resolution" value="2.00 A"/>
    <property type="chains" value="A=1-234"/>
</dbReference>
<dbReference type="PDB" id="7UAT">
    <property type="method" value="X-ray"/>
    <property type="resolution" value="2.00 A"/>
    <property type="chains" value="A=1-234"/>
</dbReference>
<dbReference type="PDB" id="7UAU">
    <property type="method" value="X-ray"/>
    <property type="resolution" value="2.10 A"/>
    <property type="chains" value="A=1-234"/>
</dbReference>
<dbReference type="PDB" id="7UAX">
    <property type="method" value="X-ray"/>
    <property type="resolution" value="2.07 A"/>
    <property type="chains" value="A=1-234"/>
</dbReference>
<dbReference type="PDB" id="7UB4">
    <property type="method" value="X-ray"/>
    <property type="resolution" value="2.40 A"/>
    <property type="chains" value="A=1-234"/>
</dbReference>
<dbReference type="PDB" id="7UB8">
    <property type="method" value="X-ray"/>
    <property type="resolution" value="2.30 A"/>
    <property type="chains" value="A/B=1-234"/>
</dbReference>
<dbReference type="PDB" id="7UBP">
    <property type="method" value="X-ray"/>
    <property type="resolution" value="2.30 A"/>
    <property type="chains" value="A=1-234"/>
</dbReference>
<dbReference type="PDB" id="7UBQ">
    <property type="method" value="X-ray"/>
    <property type="resolution" value="2.60 A"/>
    <property type="chains" value="A=1-234"/>
</dbReference>
<dbReference type="PDBsum" id="1W8G"/>
<dbReference type="PDBsum" id="3SY1"/>
<dbReference type="PDBsum" id="7U9C"/>
<dbReference type="PDBsum" id="7U9H"/>
<dbReference type="PDBsum" id="7UAT"/>
<dbReference type="PDBsum" id="7UAU"/>
<dbReference type="PDBsum" id="7UAX"/>
<dbReference type="PDBsum" id="7UB4"/>
<dbReference type="PDBsum" id="7UB8"/>
<dbReference type="PDBsum" id="7UBP"/>
<dbReference type="PDBsum" id="7UBQ"/>
<dbReference type="SMR" id="P67080"/>
<dbReference type="BioGRID" id="4261786">
    <property type="interactions" value="40"/>
</dbReference>
<dbReference type="BioGRID" id="851744">
    <property type="interactions" value="1"/>
</dbReference>
<dbReference type="DIP" id="DIP-12194N"/>
<dbReference type="FunCoup" id="P67080">
    <property type="interactions" value="759"/>
</dbReference>
<dbReference type="IntAct" id="P67080">
    <property type="interactions" value="9"/>
</dbReference>
<dbReference type="STRING" id="511145.b2951"/>
<dbReference type="jPOST" id="P67080"/>
<dbReference type="PaxDb" id="511145-b2951"/>
<dbReference type="EnsemblBacteria" id="AAC75988">
    <property type="protein sequence ID" value="AAC75988"/>
    <property type="gene ID" value="b2951"/>
</dbReference>
<dbReference type="GeneID" id="93779046"/>
<dbReference type="GeneID" id="947423"/>
<dbReference type="KEGG" id="ecj:JW2918"/>
<dbReference type="KEGG" id="eco:b2951"/>
<dbReference type="KEGG" id="ecoc:C3026_16150"/>
<dbReference type="PATRIC" id="fig|1411691.4.peg.3781"/>
<dbReference type="EchoBASE" id="EB2804"/>
<dbReference type="eggNOG" id="COG0325">
    <property type="taxonomic scope" value="Bacteria"/>
</dbReference>
<dbReference type="HOGENOM" id="CLU_059988_0_1_6"/>
<dbReference type="InParanoid" id="P67080"/>
<dbReference type="OMA" id="PLEWHMI"/>
<dbReference type="OrthoDB" id="9804072at2"/>
<dbReference type="PhylomeDB" id="P67080"/>
<dbReference type="BioCyc" id="EcoCyc:G7527-MONOMER"/>
<dbReference type="EvolutionaryTrace" id="P67080"/>
<dbReference type="PRO" id="PR:P67080"/>
<dbReference type="Proteomes" id="UP000000625">
    <property type="component" value="Chromosome"/>
</dbReference>
<dbReference type="GO" id="GO:0005737">
    <property type="term" value="C:cytoplasm"/>
    <property type="evidence" value="ECO:0000318"/>
    <property type="project" value="GO_Central"/>
</dbReference>
<dbReference type="GO" id="GO:0005829">
    <property type="term" value="C:cytosol"/>
    <property type="evidence" value="ECO:0000314"/>
    <property type="project" value="EcoCyc"/>
</dbReference>
<dbReference type="GO" id="GO:0030170">
    <property type="term" value="F:pyridoxal phosphate binding"/>
    <property type="evidence" value="ECO:0000314"/>
    <property type="project" value="EcoCyc"/>
</dbReference>
<dbReference type="CDD" id="cd06824">
    <property type="entry name" value="PLPDE_III_Yggs_like"/>
    <property type="match status" value="1"/>
</dbReference>
<dbReference type="FunFam" id="3.20.20.10:FF:000004">
    <property type="entry name" value="Pyridoxal phosphate homeostasis protein"/>
    <property type="match status" value="1"/>
</dbReference>
<dbReference type="Gene3D" id="3.20.20.10">
    <property type="entry name" value="Alanine racemase"/>
    <property type="match status" value="1"/>
</dbReference>
<dbReference type="HAMAP" id="MF_02087">
    <property type="entry name" value="PLP_homeostasis"/>
    <property type="match status" value="1"/>
</dbReference>
<dbReference type="InterPro" id="IPR001608">
    <property type="entry name" value="Ala_racemase_N"/>
</dbReference>
<dbReference type="InterPro" id="IPR029066">
    <property type="entry name" value="PLP-binding_barrel"/>
</dbReference>
<dbReference type="InterPro" id="IPR011078">
    <property type="entry name" value="PyrdxlP_homeostasis"/>
</dbReference>
<dbReference type="NCBIfam" id="TIGR00044">
    <property type="entry name" value="YggS family pyridoxal phosphate-dependent enzyme"/>
    <property type="match status" value="1"/>
</dbReference>
<dbReference type="PANTHER" id="PTHR10146">
    <property type="entry name" value="PROLINE SYNTHETASE CO-TRANSCRIBED BACTERIAL HOMOLOG PROTEIN"/>
    <property type="match status" value="1"/>
</dbReference>
<dbReference type="PANTHER" id="PTHR10146:SF14">
    <property type="entry name" value="PYRIDOXAL PHOSPHATE HOMEOSTASIS PROTEIN"/>
    <property type="match status" value="1"/>
</dbReference>
<dbReference type="Pfam" id="PF01168">
    <property type="entry name" value="Ala_racemase_N"/>
    <property type="match status" value="1"/>
</dbReference>
<dbReference type="PIRSF" id="PIRSF004848">
    <property type="entry name" value="YBL036c_PLPDEIII"/>
    <property type="match status" value="1"/>
</dbReference>
<dbReference type="SUPFAM" id="SSF51419">
    <property type="entry name" value="PLP-binding barrel"/>
    <property type="match status" value="1"/>
</dbReference>
<dbReference type="PROSITE" id="PS01211">
    <property type="entry name" value="UPF0001"/>
    <property type="match status" value="1"/>
</dbReference>
<organism>
    <name type="scientific">Escherichia coli (strain K12)</name>
    <dbReference type="NCBI Taxonomy" id="83333"/>
    <lineage>
        <taxon>Bacteria</taxon>
        <taxon>Pseudomonadati</taxon>
        <taxon>Pseudomonadota</taxon>
        <taxon>Gammaproteobacteria</taxon>
        <taxon>Enterobacterales</taxon>
        <taxon>Enterobacteriaceae</taxon>
        <taxon>Escherichia</taxon>
    </lineage>
</organism>
<comment type="function">
    <text evidence="2 3">Pyridoxal 5'-phosphate (PLP)-binding protein, which is involved in PLP homeostasis. May have a carrier function to deliver PLP to the target enzymes or a protective function so that PLP does not inactivate essential lysines in proteins (PubMed:26872910). Does not have amino acid racemase activity (PubMed:24097949).</text>
</comment>
<comment type="subunit">
    <text evidence="1 3">Monomer.</text>
</comment>
<comment type="disruption phenotype">
    <text evidence="2 3 4 7">During the stationary phase, the deletion mutant exhibits a completely different intracellular pool of amino acids and produces a significant amount of L-valine in the culture medium. The log-phase mutant displays slightly decreased coenzyme A levels, accumulates 2-ketobutyrate, 2-aminobutyrate, and, to a lesser extent, L-valine. Also exhibits an increase in the levels of isoleucine and valine metabolic enzymes (PubMed:24097949). The mutant also accumulates gamma-L-glutamyl-L-2-aminobutyryl-glycine (ophthalmic acid) (PubMed:27426274). The mutant accumulates the PLP precursor pyridoxine 5'-phosphate (PNP), and is sensitive to an excess of pyridoxine but not of pyridoxal (PubMed:26872910). Most of the phenotypes observed in the absence of yggS are probably caused by lower activities of PLP-dependent enzymes (PubMed:26872910).</text>
</comment>
<comment type="similarity">
    <text evidence="1 6">Belongs to the pyridoxal phosphate-binding protein YggS/PROSC family.</text>
</comment>
<feature type="chain" id="PRO_0000163196" description="Pyridoxal phosphate homeostasis protein">
    <location>
        <begin position="1"/>
        <end position="234"/>
    </location>
</feature>
<feature type="modified residue" description="N6-(pyridoxal phosphate)lysine" evidence="1 5 8">
    <location>
        <position position="36"/>
    </location>
</feature>
<feature type="mutagenesis site" description="Does not bind PLP." evidence="2">
    <original>K</original>
    <variation>A</variation>
    <location>
        <position position="36"/>
    </location>
</feature>
<feature type="helix" evidence="11">
    <location>
        <begin position="3"/>
        <end position="21"/>
    </location>
</feature>
<feature type="helix" evidence="11">
    <location>
        <begin position="26"/>
        <end position="28"/>
    </location>
</feature>
<feature type="strand" evidence="11">
    <location>
        <begin position="30"/>
        <end position="34"/>
    </location>
</feature>
<feature type="helix" evidence="11">
    <location>
        <begin position="40"/>
        <end position="48"/>
    </location>
</feature>
<feature type="strand" evidence="11">
    <location>
        <begin position="53"/>
        <end position="58"/>
    </location>
</feature>
<feature type="helix" evidence="11">
    <location>
        <begin position="59"/>
        <end position="72"/>
    </location>
</feature>
<feature type="strand" evidence="11">
    <location>
        <begin position="78"/>
        <end position="81"/>
    </location>
</feature>
<feature type="helix" evidence="11">
    <location>
        <begin position="87"/>
        <end position="89"/>
    </location>
</feature>
<feature type="helix" evidence="11">
    <location>
        <begin position="90"/>
        <end position="96"/>
    </location>
</feature>
<feature type="strand" evidence="11">
    <location>
        <begin position="98"/>
        <end position="103"/>
    </location>
</feature>
<feature type="helix" evidence="11">
    <location>
        <begin position="106"/>
        <end position="115"/>
    </location>
</feature>
<feature type="strand" evidence="11">
    <location>
        <begin position="123"/>
        <end position="129"/>
    </location>
</feature>
<feature type="strand" evidence="11">
    <location>
        <begin position="138"/>
        <end position="140"/>
    </location>
</feature>
<feature type="helix" evidence="11">
    <location>
        <begin position="142"/>
        <end position="144"/>
    </location>
</feature>
<feature type="helix" evidence="11">
    <location>
        <begin position="145"/>
        <end position="153"/>
    </location>
</feature>
<feature type="strand" evidence="11">
    <location>
        <begin position="158"/>
        <end position="164"/>
    </location>
</feature>
<feature type="helix" evidence="11">
    <location>
        <begin position="173"/>
        <end position="191"/>
    </location>
</feature>
<feature type="strand" evidence="12">
    <location>
        <begin position="194"/>
        <end position="196"/>
    </location>
</feature>
<feature type="strand" evidence="11">
    <location>
        <begin position="199"/>
        <end position="201"/>
    </location>
</feature>
<feature type="helix" evidence="10">
    <location>
        <begin position="205"/>
        <end position="207"/>
    </location>
</feature>
<feature type="helix" evidence="11">
    <location>
        <begin position="208"/>
        <end position="214"/>
    </location>
</feature>
<feature type="strand" evidence="11">
    <location>
        <begin position="218"/>
        <end position="222"/>
    </location>
</feature>
<feature type="helix" evidence="11">
    <location>
        <begin position="223"/>
        <end position="226"/>
    </location>
</feature>
<accession>P67080</accession>
<accession>P52054</accession>
<accession>Q2M9P2</accession>
<evidence type="ECO:0000255" key="1">
    <source>
        <dbReference type="HAMAP-Rule" id="MF_02087"/>
    </source>
</evidence>
<evidence type="ECO:0000269" key="2">
    <source>
    </source>
</evidence>
<evidence type="ECO:0000269" key="3">
    <source>
    </source>
</evidence>
<evidence type="ECO:0000269" key="4">
    <source>
    </source>
</evidence>
<evidence type="ECO:0000269" key="5">
    <source ref="6"/>
</evidence>
<evidence type="ECO:0000305" key="6"/>
<evidence type="ECO:0000305" key="7">
    <source>
    </source>
</evidence>
<evidence type="ECO:0007744" key="8">
    <source>
        <dbReference type="PDB" id="1W8G"/>
    </source>
</evidence>
<evidence type="ECO:0007744" key="9">
    <source>
        <dbReference type="PDB" id="3SY1"/>
    </source>
</evidence>
<evidence type="ECO:0007829" key="10">
    <source>
        <dbReference type="PDB" id="1W8G"/>
    </source>
</evidence>
<evidence type="ECO:0007829" key="11">
    <source>
        <dbReference type="PDB" id="3SY1"/>
    </source>
</evidence>
<evidence type="ECO:0007829" key="12">
    <source>
        <dbReference type="PDB" id="7U9H"/>
    </source>
</evidence>